<accession>C3LQZ0</accession>
<reference key="1">
    <citation type="journal article" date="2008" name="PLoS ONE">
        <title>A recalibrated molecular clock and independent origins for the cholera pandemic clones.</title>
        <authorList>
            <person name="Feng L."/>
            <person name="Reeves P.R."/>
            <person name="Lan R."/>
            <person name="Ren Y."/>
            <person name="Gao C."/>
            <person name="Zhou Z."/>
            <person name="Ren Y."/>
            <person name="Cheng J."/>
            <person name="Wang W."/>
            <person name="Wang J."/>
            <person name="Qian W."/>
            <person name="Li D."/>
            <person name="Wang L."/>
        </authorList>
    </citation>
    <scope>NUCLEOTIDE SEQUENCE [LARGE SCALE GENOMIC DNA]</scope>
    <source>
        <strain>M66-2</strain>
    </source>
</reference>
<keyword id="KW-0963">Cytoplasm</keyword>
<keyword id="KW-0324">Glycolysis</keyword>
<keyword id="KW-0456">Lyase</keyword>
<keyword id="KW-0460">Magnesium</keyword>
<keyword id="KW-0479">Metal-binding</keyword>
<keyword id="KW-0964">Secreted</keyword>
<organism>
    <name type="scientific">Vibrio cholerae serotype O1 (strain M66-2)</name>
    <dbReference type="NCBI Taxonomy" id="579112"/>
    <lineage>
        <taxon>Bacteria</taxon>
        <taxon>Pseudomonadati</taxon>
        <taxon>Pseudomonadota</taxon>
        <taxon>Gammaproteobacteria</taxon>
        <taxon>Vibrionales</taxon>
        <taxon>Vibrionaceae</taxon>
        <taxon>Vibrio</taxon>
    </lineage>
</organism>
<dbReference type="EC" id="4.2.1.11" evidence="1"/>
<dbReference type="EMBL" id="CP001233">
    <property type="protein sequence ID" value="ACP06668.1"/>
    <property type="molecule type" value="Genomic_DNA"/>
</dbReference>
<dbReference type="RefSeq" id="WP_000036741.1">
    <property type="nucleotide sequence ID" value="NC_012578.1"/>
</dbReference>
<dbReference type="SMR" id="C3LQZ0"/>
<dbReference type="GeneID" id="69718946"/>
<dbReference type="KEGG" id="vcm:VCM66_2370"/>
<dbReference type="HOGENOM" id="CLU_031223_2_1_6"/>
<dbReference type="UniPathway" id="UPA00109">
    <property type="reaction ID" value="UER00187"/>
</dbReference>
<dbReference type="Proteomes" id="UP000001217">
    <property type="component" value="Chromosome I"/>
</dbReference>
<dbReference type="GO" id="GO:0009986">
    <property type="term" value="C:cell surface"/>
    <property type="evidence" value="ECO:0007669"/>
    <property type="project" value="UniProtKB-SubCell"/>
</dbReference>
<dbReference type="GO" id="GO:0005576">
    <property type="term" value="C:extracellular region"/>
    <property type="evidence" value="ECO:0007669"/>
    <property type="project" value="UniProtKB-SubCell"/>
</dbReference>
<dbReference type="GO" id="GO:0000015">
    <property type="term" value="C:phosphopyruvate hydratase complex"/>
    <property type="evidence" value="ECO:0007669"/>
    <property type="project" value="InterPro"/>
</dbReference>
<dbReference type="GO" id="GO:0000287">
    <property type="term" value="F:magnesium ion binding"/>
    <property type="evidence" value="ECO:0007669"/>
    <property type="project" value="UniProtKB-UniRule"/>
</dbReference>
<dbReference type="GO" id="GO:0004634">
    <property type="term" value="F:phosphopyruvate hydratase activity"/>
    <property type="evidence" value="ECO:0007669"/>
    <property type="project" value="UniProtKB-UniRule"/>
</dbReference>
<dbReference type="GO" id="GO:0006096">
    <property type="term" value="P:glycolytic process"/>
    <property type="evidence" value="ECO:0007669"/>
    <property type="project" value="UniProtKB-UniRule"/>
</dbReference>
<dbReference type="CDD" id="cd03313">
    <property type="entry name" value="enolase"/>
    <property type="match status" value="1"/>
</dbReference>
<dbReference type="FunFam" id="3.20.20.120:FF:000001">
    <property type="entry name" value="Enolase"/>
    <property type="match status" value="1"/>
</dbReference>
<dbReference type="FunFam" id="3.30.390.10:FF:000001">
    <property type="entry name" value="Enolase"/>
    <property type="match status" value="1"/>
</dbReference>
<dbReference type="Gene3D" id="3.20.20.120">
    <property type="entry name" value="Enolase-like C-terminal domain"/>
    <property type="match status" value="1"/>
</dbReference>
<dbReference type="Gene3D" id="3.30.390.10">
    <property type="entry name" value="Enolase-like, N-terminal domain"/>
    <property type="match status" value="1"/>
</dbReference>
<dbReference type="HAMAP" id="MF_00318">
    <property type="entry name" value="Enolase"/>
    <property type="match status" value="1"/>
</dbReference>
<dbReference type="InterPro" id="IPR000941">
    <property type="entry name" value="Enolase"/>
</dbReference>
<dbReference type="InterPro" id="IPR036849">
    <property type="entry name" value="Enolase-like_C_sf"/>
</dbReference>
<dbReference type="InterPro" id="IPR029017">
    <property type="entry name" value="Enolase-like_N"/>
</dbReference>
<dbReference type="InterPro" id="IPR020810">
    <property type="entry name" value="Enolase_C"/>
</dbReference>
<dbReference type="InterPro" id="IPR020809">
    <property type="entry name" value="Enolase_CS"/>
</dbReference>
<dbReference type="InterPro" id="IPR020811">
    <property type="entry name" value="Enolase_N"/>
</dbReference>
<dbReference type="NCBIfam" id="TIGR01060">
    <property type="entry name" value="eno"/>
    <property type="match status" value="1"/>
</dbReference>
<dbReference type="PANTHER" id="PTHR11902">
    <property type="entry name" value="ENOLASE"/>
    <property type="match status" value="1"/>
</dbReference>
<dbReference type="PANTHER" id="PTHR11902:SF1">
    <property type="entry name" value="ENOLASE"/>
    <property type="match status" value="1"/>
</dbReference>
<dbReference type="Pfam" id="PF00113">
    <property type="entry name" value="Enolase_C"/>
    <property type="match status" value="1"/>
</dbReference>
<dbReference type="Pfam" id="PF03952">
    <property type="entry name" value="Enolase_N"/>
    <property type="match status" value="1"/>
</dbReference>
<dbReference type="PIRSF" id="PIRSF001400">
    <property type="entry name" value="Enolase"/>
    <property type="match status" value="1"/>
</dbReference>
<dbReference type="PRINTS" id="PR00148">
    <property type="entry name" value="ENOLASE"/>
</dbReference>
<dbReference type="SFLD" id="SFLDS00001">
    <property type="entry name" value="Enolase"/>
    <property type="match status" value="1"/>
</dbReference>
<dbReference type="SFLD" id="SFLDF00002">
    <property type="entry name" value="enolase"/>
    <property type="match status" value="1"/>
</dbReference>
<dbReference type="SMART" id="SM01192">
    <property type="entry name" value="Enolase_C"/>
    <property type="match status" value="1"/>
</dbReference>
<dbReference type="SMART" id="SM01193">
    <property type="entry name" value="Enolase_N"/>
    <property type="match status" value="1"/>
</dbReference>
<dbReference type="SUPFAM" id="SSF51604">
    <property type="entry name" value="Enolase C-terminal domain-like"/>
    <property type="match status" value="1"/>
</dbReference>
<dbReference type="SUPFAM" id="SSF54826">
    <property type="entry name" value="Enolase N-terminal domain-like"/>
    <property type="match status" value="1"/>
</dbReference>
<dbReference type="PROSITE" id="PS00164">
    <property type="entry name" value="ENOLASE"/>
    <property type="match status" value="1"/>
</dbReference>
<proteinExistence type="inferred from homology"/>
<name>ENO_VIBCM</name>
<feature type="chain" id="PRO_1000133030" description="Enolase">
    <location>
        <begin position="1"/>
        <end position="433"/>
    </location>
</feature>
<feature type="active site" description="Proton donor" evidence="1">
    <location>
        <position position="209"/>
    </location>
</feature>
<feature type="active site" description="Proton acceptor" evidence="1">
    <location>
        <position position="343"/>
    </location>
</feature>
<feature type="binding site" evidence="1">
    <location>
        <position position="167"/>
    </location>
    <ligand>
        <name>(2R)-2-phosphoglycerate</name>
        <dbReference type="ChEBI" id="CHEBI:58289"/>
    </ligand>
</feature>
<feature type="binding site" evidence="1">
    <location>
        <position position="246"/>
    </location>
    <ligand>
        <name>Mg(2+)</name>
        <dbReference type="ChEBI" id="CHEBI:18420"/>
    </ligand>
</feature>
<feature type="binding site" evidence="1">
    <location>
        <position position="291"/>
    </location>
    <ligand>
        <name>Mg(2+)</name>
        <dbReference type="ChEBI" id="CHEBI:18420"/>
    </ligand>
</feature>
<feature type="binding site" evidence="1">
    <location>
        <position position="318"/>
    </location>
    <ligand>
        <name>Mg(2+)</name>
        <dbReference type="ChEBI" id="CHEBI:18420"/>
    </ligand>
</feature>
<feature type="binding site" evidence="1">
    <location>
        <position position="343"/>
    </location>
    <ligand>
        <name>(2R)-2-phosphoglycerate</name>
        <dbReference type="ChEBI" id="CHEBI:58289"/>
    </ligand>
</feature>
<feature type="binding site" evidence="1">
    <location>
        <position position="372"/>
    </location>
    <ligand>
        <name>(2R)-2-phosphoglycerate</name>
        <dbReference type="ChEBI" id="CHEBI:58289"/>
    </ligand>
</feature>
<feature type="binding site" evidence="1">
    <location>
        <position position="373"/>
    </location>
    <ligand>
        <name>(2R)-2-phosphoglycerate</name>
        <dbReference type="ChEBI" id="CHEBI:58289"/>
    </ligand>
</feature>
<feature type="binding site" evidence="1">
    <location>
        <position position="394"/>
    </location>
    <ligand>
        <name>(2R)-2-phosphoglycerate</name>
        <dbReference type="ChEBI" id="CHEBI:58289"/>
    </ligand>
</feature>
<comment type="function">
    <text evidence="1">Catalyzes the reversible conversion of 2-phosphoglycerate (2-PG) into phosphoenolpyruvate (PEP). It is essential for the degradation of carbohydrates via glycolysis.</text>
</comment>
<comment type="catalytic activity">
    <reaction evidence="1">
        <text>(2R)-2-phosphoglycerate = phosphoenolpyruvate + H2O</text>
        <dbReference type="Rhea" id="RHEA:10164"/>
        <dbReference type="ChEBI" id="CHEBI:15377"/>
        <dbReference type="ChEBI" id="CHEBI:58289"/>
        <dbReference type="ChEBI" id="CHEBI:58702"/>
        <dbReference type="EC" id="4.2.1.11"/>
    </reaction>
</comment>
<comment type="cofactor">
    <cofactor evidence="1">
        <name>Mg(2+)</name>
        <dbReference type="ChEBI" id="CHEBI:18420"/>
    </cofactor>
    <text evidence="1">Binds a second Mg(2+) ion via substrate during catalysis.</text>
</comment>
<comment type="pathway">
    <text evidence="1">Carbohydrate degradation; glycolysis; pyruvate from D-glyceraldehyde 3-phosphate: step 4/5.</text>
</comment>
<comment type="subunit">
    <text evidence="1">Component of the RNA degradosome, a multiprotein complex involved in RNA processing and mRNA degradation.</text>
</comment>
<comment type="subcellular location">
    <subcellularLocation>
        <location evidence="1">Cytoplasm</location>
    </subcellularLocation>
    <subcellularLocation>
        <location evidence="1">Secreted</location>
    </subcellularLocation>
    <subcellularLocation>
        <location evidence="1">Cell surface</location>
    </subcellularLocation>
    <text evidence="1">Fractions of enolase are present in both the cytoplasm and on the cell surface.</text>
</comment>
<comment type="similarity">
    <text evidence="1">Belongs to the enolase family.</text>
</comment>
<protein>
    <recommendedName>
        <fullName evidence="1">Enolase</fullName>
        <ecNumber evidence="1">4.2.1.11</ecNumber>
    </recommendedName>
    <alternativeName>
        <fullName evidence="1">2-phospho-D-glycerate hydro-lyase</fullName>
    </alternativeName>
    <alternativeName>
        <fullName evidence="1">2-phosphoglycerate dehydratase</fullName>
    </alternativeName>
</protein>
<evidence type="ECO:0000255" key="1">
    <source>
        <dbReference type="HAMAP-Rule" id="MF_00318"/>
    </source>
</evidence>
<gene>
    <name evidence="1" type="primary">eno</name>
    <name type="ordered locus">VCM66_2370</name>
</gene>
<sequence>MSKIVKVLGREIIDSRGNPTVEAEVHLEGGFVGMAAAPSGASTGSREALELRDGDKSRFLGKGVLKALAAVNGPIADALVGKDAKDQATIDQIMIDLDGTENKSNFGANAILAVSLANAKAAAAAKGMPLYEHIAELNGTPGVFSMPLPMMNIINGGEHADNNVDIQEFMIQPVGAKTLKEAVRMGAEVFHNLAKVLKSKGYNTAVGDEGGFAPNLKSNAEALEVIAEAVAAAGYKLGTDITLAMDCAASEFYDAEKKEYNLKGEGRIFTSNGFSDFLEELTEKFPIVSIEDGLDESDWEGFAYQTEKLGKKIQIVGDDLFVTNTKILKRGIDNGIANSILIKFNQIGSLTETLAAIKMAKDAGYTAVISHRSGETEDATIADLAVGTAAGQIKTGSMSRSDRVAKYNQLIRIEEALGSRAPFNGLKEVKGQA</sequence>